<proteinExistence type="inferred from homology"/>
<name>PSTB_BORBU</name>
<comment type="function">
    <text evidence="1">Part of the ABC transporter complex PstSACB involved in phosphate import. Responsible for energy coupling to the transport system.</text>
</comment>
<comment type="catalytic activity">
    <reaction evidence="1">
        <text>phosphate(out) + ATP + H2O = ADP + 2 phosphate(in) + H(+)</text>
        <dbReference type="Rhea" id="RHEA:24440"/>
        <dbReference type="ChEBI" id="CHEBI:15377"/>
        <dbReference type="ChEBI" id="CHEBI:15378"/>
        <dbReference type="ChEBI" id="CHEBI:30616"/>
        <dbReference type="ChEBI" id="CHEBI:43474"/>
        <dbReference type="ChEBI" id="CHEBI:456216"/>
        <dbReference type="EC" id="7.3.2.1"/>
    </reaction>
</comment>
<comment type="subunit">
    <text evidence="1">The complex is composed of two ATP-binding proteins (PstB), two transmembrane proteins (PstC and PstA) and a solute-binding protein (PstS).</text>
</comment>
<comment type="subcellular location">
    <subcellularLocation>
        <location evidence="1">Cell inner membrane</location>
        <topology evidence="1">Peripheral membrane protein</topology>
    </subcellularLocation>
</comment>
<comment type="similarity">
    <text evidence="1">Belongs to the ABC transporter superfamily. Phosphate importer (TC 3.A.1.7) family.</text>
</comment>
<reference key="1">
    <citation type="journal article" date="1997" name="Nature">
        <title>Genomic sequence of a Lyme disease spirochaete, Borrelia burgdorferi.</title>
        <authorList>
            <person name="Fraser C.M."/>
            <person name="Casjens S."/>
            <person name="Huang W.M."/>
            <person name="Sutton G.G."/>
            <person name="Clayton R.A."/>
            <person name="Lathigra R."/>
            <person name="White O."/>
            <person name="Ketchum K.A."/>
            <person name="Dodson R.J."/>
            <person name="Hickey E.K."/>
            <person name="Gwinn M.L."/>
            <person name="Dougherty B.A."/>
            <person name="Tomb J.-F."/>
            <person name="Fleischmann R.D."/>
            <person name="Richardson D.L."/>
            <person name="Peterson J.D."/>
            <person name="Kerlavage A.R."/>
            <person name="Quackenbush J."/>
            <person name="Salzberg S.L."/>
            <person name="Hanson M."/>
            <person name="van Vugt R."/>
            <person name="Palmer N."/>
            <person name="Adams M.D."/>
            <person name="Gocayne J.D."/>
            <person name="Weidman J.F."/>
            <person name="Utterback T.R."/>
            <person name="Watthey L."/>
            <person name="McDonald L.A."/>
            <person name="Artiach P."/>
            <person name="Bowman C."/>
            <person name="Garland S.A."/>
            <person name="Fujii C."/>
            <person name="Cotton M.D."/>
            <person name="Horst K."/>
            <person name="Roberts K.M."/>
            <person name="Hatch B."/>
            <person name="Smith H.O."/>
            <person name="Venter J.C."/>
        </authorList>
    </citation>
    <scope>NUCLEOTIDE SEQUENCE [LARGE SCALE GENOMIC DNA]</scope>
    <source>
        <strain>ATCC 35210 / DSM 4680 / CIP 102532 / B31</strain>
    </source>
</reference>
<keyword id="KW-0067">ATP-binding</keyword>
<keyword id="KW-0997">Cell inner membrane</keyword>
<keyword id="KW-1003">Cell membrane</keyword>
<keyword id="KW-0472">Membrane</keyword>
<keyword id="KW-0547">Nucleotide-binding</keyword>
<keyword id="KW-0592">Phosphate transport</keyword>
<keyword id="KW-1185">Reference proteome</keyword>
<keyword id="KW-1278">Translocase</keyword>
<keyword id="KW-0813">Transport</keyword>
<feature type="chain" id="PRO_0000092788" description="Phosphate import ATP-binding protein PstB">
    <location>
        <begin position="1"/>
        <end position="260"/>
    </location>
</feature>
<feature type="domain" description="ABC transporter" evidence="1">
    <location>
        <begin position="14"/>
        <end position="255"/>
    </location>
</feature>
<feature type="binding site" evidence="1">
    <location>
        <begin position="46"/>
        <end position="53"/>
    </location>
    <ligand>
        <name>ATP</name>
        <dbReference type="ChEBI" id="CHEBI:30616"/>
    </ligand>
</feature>
<accession>O51236</accession>
<protein>
    <recommendedName>
        <fullName evidence="1">Phosphate import ATP-binding protein PstB</fullName>
        <ecNumber evidence="1">7.3.2.1</ecNumber>
    </recommendedName>
    <alternativeName>
        <fullName evidence="1">ABC phosphate transporter</fullName>
    </alternativeName>
    <alternativeName>
        <fullName evidence="1">Phosphate-transporting ATPase</fullName>
    </alternativeName>
</protein>
<sequence>MIKEKDTPKNEVIIETENLNLFYTDFKALNKINMKILKNSITALIGPSGCGKSTFLRTLNRMNDLVEGIKIEGNVIYEGKNIYSNNFDILELRRKIGMVFQTPNPFLMSIYDNISYGPKIHGTKDKKKLDEIVEQSLKKSALWNEVKDKLHTNALSLSGGQQQRLCIARTLAIEPNVILMDEPTSALDPISTGKIEELIINLKESYTIIIVTHNMQQAGRISDRTAFFLNGCIEEESSTDELFFNPKNTKTEEYISGKFG</sequence>
<dbReference type="EC" id="7.3.2.1" evidence="1"/>
<dbReference type="EMBL" id="AE000783">
    <property type="protein sequence ID" value="AAC66606.1"/>
    <property type="molecule type" value="Genomic_DNA"/>
</dbReference>
<dbReference type="PIR" id="B70127">
    <property type="entry name" value="B70127"/>
</dbReference>
<dbReference type="RefSeq" id="NP_212352.1">
    <property type="nucleotide sequence ID" value="NC_001318.1"/>
</dbReference>
<dbReference type="RefSeq" id="WP_002657006.1">
    <property type="nucleotide sequence ID" value="NC_001318.1"/>
</dbReference>
<dbReference type="SMR" id="O51236"/>
<dbReference type="STRING" id="224326.BB_0218"/>
<dbReference type="TCDB" id="3.A.1.7.5">
    <property type="family name" value="the atp-binding cassette (abc) superfamily"/>
</dbReference>
<dbReference type="PaxDb" id="224326-BB_0218"/>
<dbReference type="EnsemblBacteria" id="AAC66606">
    <property type="protein sequence ID" value="AAC66606"/>
    <property type="gene ID" value="BB_0218"/>
</dbReference>
<dbReference type="KEGG" id="bbu:BB_0218"/>
<dbReference type="PATRIC" id="fig|224326.49.peg.616"/>
<dbReference type="HOGENOM" id="CLU_000604_1_22_12"/>
<dbReference type="OrthoDB" id="9805538at2"/>
<dbReference type="Proteomes" id="UP000001807">
    <property type="component" value="Chromosome"/>
</dbReference>
<dbReference type="GO" id="GO:0005886">
    <property type="term" value="C:plasma membrane"/>
    <property type="evidence" value="ECO:0007669"/>
    <property type="project" value="UniProtKB-SubCell"/>
</dbReference>
<dbReference type="GO" id="GO:0005524">
    <property type="term" value="F:ATP binding"/>
    <property type="evidence" value="ECO:0007669"/>
    <property type="project" value="UniProtKB-KW"/>
</dbReference>
<dbReference type="GO" id="GO:0016887">
    <property type="term" value="F:ATP hydrolysis activity"/>
    <property type="evidence" value="ECO:0007669"/>
    <property type="project" value="InterPro"/>
</dbReference>
<dbReference type="GO" id="GO:0015415">
    <property type="term" value="F:ATPase-coupled phosphate ion transmembrane transporter activity"/>
    <property type="evidence" value="ECO:0007669"/>
    <property type="project" value="UniProtKB-EC"/>
</dbReference>
<dbReference type="GO" id="GO:0035435">
    <property type="term" value="P:phosphate ion transmembrane transport"/>
    <property type="evidence" value="ECO:0007669"/>
    <property type="project" value="InterPro"/>
</dbReference>
<dbReference type="CDD" id="cd03260">
    <property type="entry name" value="ABC_PstB_phosphate_transporter"/>
    <property type="match status" value="1"/>
</dbReference>
<dbReference type="Gene3D" id="3.40.50.300">
    <property type="entry name" value="P-loop containing nucleotide triphosphate hydrolases"/>
    <property type="match status" value="1"/>
</dbReference>
<dbReference type="InterPro" id="IPR003593">
    <property type="entry name" value="AAA+_ATPase"/>
</dbReference>
<dbReference type="InterPro" id="IPR003439">
    <property type="entry name" value="ABC_transporter-like_ATP-bd"/>
</dbReference>
<dbReference type="InterPro" id="IPR017871">
    <property type="entry name" value="ABC_transporter-like_CS"/>
</dbReference>
<dbReference type="InterPro" id="IPR027417">
    <property type="entry name" value="P-loop_NTPase"/>
</dbReference>
<dbReference type="InterPro" id="IPR005670">
    <property type="entry name" value="PstB-like"/>
</dbReference>
<dbReference type="NCBIfam" id="TIGR00972">
    <property type="entry name" value="3a0107s01c2"/>
    <property type="match status" value="1"/>
</dbReference>
<dbReference type="PANTHER" id="PTHR43423">
    <property type="entry name" value="ABC TRANSPORTER I FAMILY MEMBER 17"/>
    <property type="match status" value="1"/>
</dbReference>
<dbReference type="PANTHER" id="PTHR43423:SF1">
    <property type="entry name" value="ABC TRANSPORTER I FAMILY MEMBER 17"/>
    <property type="match status" value="1"/>
</dbReference>
<dbReference type="Pfam" id="PF00005">
    <property type="entry name" value="ABC_tran"/>
    <property type="match status" value="1"/>
</dbReference>
<dbReference type="SMART" id="SM00382">
    <property type="entry name" value="AAA"/>
    <property type="match status" value="1"/>
</dbReference>
<dbReference type="SUPFAM" id="SSF52540">
    <property type="entry name" value="P-loop containing nucleoside triphosphate hydrolases"/>
    <property type="match status" value="1"/>
</dbReference>
<dbReference type="PROSITE" id="PS00211">
    <property type="entry name" value="ABC_TRANSPORTER_1"/>
    <property type="match status" value="1"/>
</dbReference>
<dbReference type="PROSITE" id="PS50893">
    <property type="entry name" value="ABC_TRANSPORTER_2"/>
    <property type="match status" value="1"/>
</dbReference>
<dbReference type="PROSITE" id="PS51238">
    <property type="entry name" value="PSTB"/>
    <property type="match status" value="1"/>
</dbReference>
<organism>
    <name type="scientific">Borreliella burgdorferi (strain ATCC 35210 / DSM 4680 / CIP 102532 / B31)</name>
    <name type="common">Borrelia burgdorferi</name>
    <dbReference type="NCBI Taxonomy" id="224326"/>
    <lineage>
        <taxon>Bacteria</taxon>
        <taxon>Pseudomonadati</taxon>
        <taxon>Spirochaetota</taxon>
        <taxon>Spirochaetia</taxon>
        <taxon>Spirochaetales</taxon>
        <taxon>Borreliaceae</taxon>
        <taxon>Borreliella</taxon>
    </lineage>
</organism>
<evidence type="ECO:0000255" key="1">
    <source>
        <dbReference type="HAMAP-Rule" id="MF_01702"/>
    </source>
</evidence>
<gene>
    <name evidence="1" type="primary">pstB</name>
    <name type="ordered locus">BB_0218</name>
</gene>